<evidence type="ECO:0000255" key="1"/>
<evidence type="ECO:0000305" key="2"/>
<accession>P63694</accession>
<accession>A0A1R3XYI7</accession>
<accession>P71768</accession>
<accession>X2BHS6</accession>
<reference key="1">
    <citation type="journal article" date="2003" name="Proc. Natl. Acad. Sci. U.S.A.">
        <title>The complete genome sequence of Mycobacterium bovis.</title>
        <authorList>
            <person name="Garnier T."/>
            <person name="Eiglmeier K."/>
            <person name="Camus J.-C."/>
            <person name="Medina N."/>
            <person name="Mansoor H."/>
            <person name="Pryor M."/>
            <person name="Duthoy S."/>
            <person name="Grondin S."/>
            <person name="Lacroix C."/>
            <person name="Monsempe C."/>
            <person name="Simon S."/>
            <person name="Harris B."/>
            <person name="Atkin R."/>
            <person name="Doggett J."/>
            <person name="Mayes R."/>
            <person name="Keating L."/>
            <person name="Wheeler P.R."/>
            <person name="Parkhill J."/>
            <person name="Barrell B.G."/>
            <person name="Cole S.T."/>
            <person name="Gordon S.V."/>
            <person name="Hewinson R.G."/>
        </authorList>
    </citation>
    <scope>NUCLEOTIDE SEQUENCE [LARGE SCALE GENOMIC DNA]</scope>
    <source>
        <strain>ATCC BAA-935 / AF2122/97</strain>
    </source>
</reference>
<reference key="2">
    <citation type="journal article" date="2017" name="Genome Announc.">
        <title>Updated reference genome sequence and annotation of Mycobacterium bovis AF2122/97.</title>
        <authorList>
            <person name="Malone K.M."/>
            <person name="Farrell D."/>
            <person name="Stuber T.P."/>
            <person name="Schubert O.T."/>
            <person name="Aebersold R."/>
            <person name="Robbe-Austerman S."/>
            <person name="Gordon S.V."/>
        </authorList>
    </citation>
    <scope>NUCLEOTIDE SEQUENCE [LARGE SCALE GENOMIC DNA]</scope>
    <scope>GENOME REANNOTATION</scope>
    <source>
        <strain>ATCC BAA-935 / AF2122/97</strain>
    </source>
</reference>
<proteinExistence type="inferred from homology"/>
<protein>
    <recommendedName>
        <fullName>Uncharacterized protein Mb1524</fullName>
    </recommendedName>
</protein>
<dbReference type="EMBL" id="LT708304">
    <property type="protein sequence ID" value="SIU00127.1"/>
    <property type="molecule type" value="Genomic_DNA"/>
</dbReference>
<dbReference type="RefSeq" id="NP_855176.1">
    <property type="nucleotide sequence ID" value="NC_002945.3"/>
</dbReference>
<dbReference type="RefSeq" id="WP_003407571.1">
    <property type="nucleotide sequence ID" value="NC_002945.4"/>
</dbReference>
<dbReference type="SMR" id="P63694"/>
<dbReference type="KEGG" id="mbo:BQ2027_MB1524"/>
<dbReference type="PATRIC" id="fig|233413.5.peg.1665"/>
<dbReference type="Proteomes" id="UP000001419">
    <property type="component" value="Chromosome"/>
</dbReference>
<dbReference type="GO" id="GO:0016020">
    <property type="term" value="C:membrane"/>
    <property type="evidence" value="ECO:0007669"/>
    <property type="project" value="UniProtKB-SubCell"/>
</dbReference>
<dbReference type="CDD" id="cd08829">
    <property type="entry name" value="SPFH_paraslipin"/>
    <property type="match status" value="1"/>
</dbReference>
<dbReference type="FunFam" id="3.30.479.30:FF:000019">
    <property type="entry name" value="Possible exported conserved protein"/>
    <property type="match status" value="1"/>
</dbReference>
<dbReference type="Gene3D" id="3.30.479.30">
    <property type="entry name" value="Band 7 domain"/>
    <property type="match status" value="1"/>
</dbReference>
<dbReference type="InterPro" id="IPR050710">
    <property type="entry name" value="Band7/mec-2_domain"/>
</dbReference>
<dbReference type="InterPro" id="IPR001107">
    <property type="entry name" value="Band_7"/>
</dbReference>
<dbReference type="InterPro" id="IPR036013">
    <property type="entry name" value="Band_7/SPFH_dom_sf"/>
</dbReference>
<dbReference type="InterPro" id="IPR018080">
    <property type="entry name" value="Band_7/stomatin-like_CS"/>
</dbReference>
<dbReference type="InterPro" id="IPR001972">
    <property type="entry name" value="Stomatin_HflK_fam"/>
</dbReference>
<dbReference type="PANTHER" id="PTHR43327">
    <property type="entry name" value="STOMATIN-LIKE PROTEIN 2, MITOCHONDRIAL"/>
    <property type="match status" value="1"/>
</dbReference>
<dbReference type="PANTHER" id="PTHR43327:SF10">
    <property type="entry name" value="STOMATIN-LIKE PROTEIN 2, MITOCHONDRIAL"/>
    <property type="match status" value="1"/>
</dbReference>
<dbReference type="Pfam" id="PF01145">
    <property type="entry name" value="Band_7"/>
    <property type="match status" value="1"/>
</dbReference>
<dbReference type="PRINTS" id="PR00721">
    <property type="entry name" value="STOMATIN"/>
</dbReference>
<dbReference type="SMART" id="SM00244">
    <property type="entry name" value="PHB"/>
    <property type="match status" value="1"/>
</dbReference>
<dbReference type="SUPFAM" id="SSF117892">
    <property type="entry name" value="Band 7/SPFH domain"/>
    <property type="match status" value="1"/>
</dbReference>
<dbReference type="PROSITE" id="PS01270">
    <property type="entry name" value="BAND_7"/>
    <property type="match status" value="1"/>
</dbReference>
<keyword id="KW-0472">Membrane</keyword>
<keyword id="KW-1185">Reference proteome</keyword>
<keyword id="KW-0812">Transmembrane</keyword>
<keyword id="KW-1133">Transmembrane helix</keyword>
<name>Y1524_MYCBO</name>
<comment type="subcellular location">
    <subcellularLocation>
        <location evidence="2">Membrane</location>
        <topology evidence="2">Single-pass membrane protein</topology>
    </subcellularLocation>
</comment>
<comment type="similarity">
    <text evidence="2">Belongs to the band 7/mec-2 family.</text>
</comment>
<feature type="chain" id="PRO_0000094061" description="Uncharacterized protein Mb1524">
    <location>
        <begin position="1"/>
        <end position="381"/>
    </location>
</feature>
<feature type="transmembrane region" description="Helical" evidence="1">
    <location>
        <begin position="3"/>
        <end position="23"/>
    </location>
</feature>
<gene>
    <name type="ordered locus">BQ2027_MB1524</name>
</gene>
<sequence length="381" mass="41282">MQGAVAGLVFLAVLVIFAIIVVAKSVALIPQAEAAVIERLGRYSRTVSGQLTLLVPFIDRVRARVDLRERVVSFPPQPVITEDNLTLNIDTVVYFQVTVPQAAVYEISNYIVGVEQLTTTTLRNVVGGMTLEQTLTSRDQINAQLRGVLDEATGRWGLRVARVELRSIDPPPSIQASMEKQMKADREKRAMILTAEGTREAAIKQAEGQKQAQILAAEGAKQAAILAAEADRQSRMLRAQGERAAAYLQAQGQAKAIEKTFAAIKAGRPTPEMLAYQYLQTLPEMARGDANKVWVVPSDFNAALQGFTRLLGKPGEDGVFRFEPSPVEDQPKHAADGDDAEVAGWFSTDTDPSIARAVATAEAIARKPVEGSLGTPPRLTQ</sequence>
<organism>
    <name type="scientific">Mycobacterium bovis (strain ATCC BAA-935 / AF2122/97)</name>
    <dbReference type="NCBI Taxonomy" id="233413"/>
    <lineage>
        <taxon>Bacteria</taxon>
        <taxon>Bacillati</taxon>
        <taxon>Actinomycetota</taxon>
        <taxon>Actinomycetes</taxon>
        <taxon>Mycobacteriales</taxon>
        <taxon>Mycobacteriaceae</taxon>
        <taxon>Mycobacterium</taxon>
        <taxon>Mycobacterium tuberculosis complex</taxon>
    </lineage>
</organism>